<reference key="1">
    <citation type="journal article" date="2008" name="Genome Res.">
        <title>Insights from the complete genome sequence of Mycobacterium marinum on the evolution of Mycobacterium tuberculosis.</title>
        <authorList>
            <person name="Stinear T.P."/>
            <person name="Seemann T."/>
            <person name="Harrison P.F."/>
            <person name="Jenkin G.A."/>
            <person name="Davies J.K."/>
            <person name="Johnson P.D."/>
            <person name="Abdellah Z."/>
            <person name="Arrowsmith C."/>
            <person name="Chillingworth T."/>
            <person name="Churcher C."/>
            <person name="Clarke K."/>
            <person name="Cronin A."/>
            <person name="Davis P."/>
            <person name="Goodhead I."/>
            <person name="Holroyd N."/>
            <person name="Jagels K."/>
            <person name="Lord A."/>
            <person name="Moule S."/>
            <person name="Mungall K."/>
            <person name="Norbertczak H."/>
            <person name="Quail M.A."/>
            <person name="Rabbinowitsch E."/>
            <person name="Walker D."/>
            <person name="White B."/>
            <person name="Whitehead S."/>
            <person name="Small P.L."/>
            <person name="Brosch R."/>
            <person name="Ramakrishnan L."/>
            <person name="Fischbach M.A."/>
            <person name="Parkhill J."/>
            <person name="Cole S.T."/>
        </authorList>
    </citation>
    <scope>NUCLEOTIDE SEQUENCE [LARGE SCALE GENOMIC DNA]</scope>
    <source>
        <strain>ATCC BAA-535 / M</strain>
    </source>
</reference>
<protein>
    <recommendedName>
        <fullName evidence="1">Proteasome subunit alpha</fullName>
    </recommendedName>
    <alternativeName>
        <fullName evidence="1">20S proteasome alpha subunit</fullName>
    </alternativeName>
    <alternativeName>
        <fullName evidence="1">Proteasome core protein PrcA</fullName>
    </alternativeName>
</protein>
<proteinExistence type="inferred from homology"/>
<gene>
    <name evidence="1" type="primary">prcA</name>
    <name type="ordered locus">MMAR_3084</name>
</gene>
<keyword id="KW-0963">Cytoplasm</keyword>
<keyword id="KW-0647">Proteasome</keyword>
<keyword id="KW-1185">Reference proteome</keyword>
<sequence>MSFPYFISPEQAMRERSELARKGIARGKSVVALAFAGGVLFVAENPSRSLQKISELYDRVGFAAAGKFNEFDNLRRGGIQFADTRGYAYDRRDVTGRQLANVYAQTLGTIFTEQAKPYEVELCVAEVAHYGESKAPELYRITYDGSIADEPHFVVMGGTTEPITTALKNTYTENADLPDALGIAVEALRAGSAENSSNDQPVLGVASLEAAILDANKPRRAFRRLTRSTLETLLQERDSKESAESEEPKESEEGKKTGKKSDADSSD</sequence>
<dbReference type="EMBL" id="CP000854">
    <property type="protein sequence ID" value="ACC41519.1"/>
    <property type="molecule type" value="Genomic_DNA"/>
</dbReference>
<dbReference type="RefSeq" id="WP_012394769.1">
    <property type="nucleotide sequence ID" value="NC_010612.1"/>
</dbReference>
<dbReference type="SMR" id="B2HFV5"/>
<dbReference type="STRING" id="216594.MMAR_3084"/>
<dbReference type="MEROPS" id="T01.980"/>
<dbReference type="KEGG" id="mmi:MMAR_3084"/>
<dbReference type="eggNOG" id="COG0638">
    <property type="taxonomic scope" value="Bacteria"/>
</dbReference>
<dbReference type="HOGENOM" id="CLU_071031_0_0_11"/>
<dbReference type="OrthoDB" id="9775643at2"/>
<dbReference type="UniPathway" id="UPA00997"/>
<dbReference type="Proteomes" id="UP000001190">
    <property type="component" value="Chromosome"/>
</dbReference>
<dbReference type="GO" id="GO:0005737">
    <property type="term" value="C:cytoplasm"/>
    <property type="evidence" value="ECO:0007669"/>
    <property type="project" value="UniProtKB-SubCell"/>
</dbReference>
<dbReference type="GO" id="GO:0019773">
    <property type="term" value="C:proteasome core complex, alpha-subunit complex"/>
    <property type="evidence" value="ECO:0007669"/>
    <property type="project" value="UniProtKB-UniRule"/>
</dbReference>
<dbReference type="GO" id="GO:0004298">
    <property type="term" value="F:threonine-type endopeptidase activity"/>
    <property type="evidence" value="ECO:0007669"/>
    <property type="project" value="InterPro"/>
</dbReference>
<dbReference type="GO" id="GO:0019941">
    <property type="term" value="P:modification-dependent protein catabolic process"/>
    <property type="evidence" value="ECO:0007669"/>
    <property type="project" value="UniProtKB-UniRule"/>
</dbReference>
<dbReference type="GO" id="GO:0010498">
    <property type="term" value="P:proteasomal protein catabolic process"/>
    <property type="evidence" value="ECO:0007669"/>
    <property type="project" value="UniProtKB-UniRule"/>
</dbReference>
<dbReference type="CDD" id="cd01906">
    <property type="entry name" value="proteasome_protease_HslV"/>
    <property type="match status" value="1"/>
</dbReference>
<dbReference type="FunFam" id="3.60.20.10:FF:000023">
    <property type="entry name" value="Proteasome subunit alpha"/>
    <property type="match status" value="1"/>
</dbReference>
<dbReference type="Gene3D" id="3.60.20.10">
    <property type="entry name" value="Glutamine Phosphoribosylpyrophosphate, subunit 1, domain 1"/>
    <property type="match status" value="1"/>
</dbReference>
<dbReference type="HAMAP" id="MF_00289_B">
    <property type="entry name" value="Proteasome_A_B"/>
    <property type="match status" value="1"/>
</dbReference>
<dbReference type="InterPro" id="IPR029055">
    <property type="entry name" value="Ntn_hydrolases_N"/>
</dbReference>
<dbReference type="InterPro" id="IPR050115">
    <property type="entry name" value="Proteasome_alpha"/>
</dbReference>
<dbReference type="InterPro" id="IPR023332">
    <property type="entry name" value="Proteasome_alpha-type"/>
</dbReference>
<dbReference type="InterPro" id="IPR022296">
    <property type="entry name" value="Proteasome_asu_bac"/>
</dbReference>
<dbReference type="InterPro" id="IPR001353">
    <property type="entry name" value="Proteasome_sua/b"/>
</dbReference>
<dbReference type="NCBIfam" id="TIGR03691">
    <property type="entry name" value="20S_bact_alpha"/>
    <property type="match status" value="1"/>
</dbReference>
<dbReference type="PANTHER" id="PTHR11599">
    <property type="entry name" value="PROTEASOME SUBUNIT ALPHA/BETA"/>
    <property type="match status" value="1"/>
</dbReference>
<dbReference type="Pfam" id="PF00227">
    <property type="entry name" value="Proteasome"/>
    <property type="match status" value="1"/>
</dbReference>
<dbReference type="SUPFAM" id="SSF56235">
    <property type="entry name" value="N-terminal nucleophile aminohydrolases (Ntn hydrolases)"/>
    <property type="match status" value="1"/>
</dbReference>
<dbReference type="PROSITE" id="PS51475">
    <property type="entry name" value="PROTEASOME_ALPHA_2"/>
    <property type="match status" value="1"/>
</dbReference>
<evidence type="ECO:0000255" key="1">
    <source>
        <dbReference type="HAMAP-Rule" id="MF_00289"/>
    </source>
</evidence>
<evidence type="ECO:0000256" key="2">
    <source>
        <dbReference type="SAM" id="MobiDB-lite"/>
    </source>
</evidence>
<accession>B2HFV5</accession>
<name>PSA_MYCMM</name>
<organism>
    <name type="scientific">Mycobacterium marinum (strain ATCC BAA-535 / M)</name>
    <dbReference type="NCBI Taxonomy" id="216594"/>
    <lineage>
        <taxon>Bacteria</taxon>
        <taxon>Bacillati</taxon>
        <taxon>Actinomycetota</taxon>
        <taxon>Actinomycetes</taxon>
        <taxon>Mycobacteriales</taxon>
        <taxon>Mycobacteriaceae</taxon>
        <taxon>Mycobacterium</taxon>
        <taxon>Mycobacterium ulcerans group</taxon>
    </lineage>
</organism>
<comment type="function">
    <text evidence="1">Component of the proteasome core, a large protease complex with broad specificity involved in protein degradation.</text>
</comment>
<comment type="activity regulation">
    <text evidence="1">The formation of the proteasomal ATPase ARC-20S proteasome complex, likely via the docking of the C-termini of ARC into the intersubunit pockets in the alpha-rings, may trigger opening of the gate for substrate entry. Interconversion between the open-gate and close-gate conformations leads to a dynamic regulation of the 20S proteasome proteolysis activity.</text>
</comment>
<comment type="pathway">
    <text evidence="1">Protein degradation; proteasomal Pup-dependent pathway.</text>
</comment>
<comment type="subunit">
    <text evidence="1">The 20S proteasome core is composed of 14 alpha and 14 beta subunits that assemble into four stacked heptameric rings, resulting in a barrel-shaped structure. The two inner rings, each composed of seven catalytic beta subunits, are sandwiched by two outer rings, each composed of seven alpha subunits. The catalytic chamber with the active sites is on the inside of the barrel. Has a gated structure, the ends of the cylinder being occluded by the N-termini of the alpha-subunits. Is capped by the proteasome-associated ATPase, ARC.</text>
</comment>
<comment type="subcellular location">
    <subcellularLocation>
        <location evidence="1">Cytoplasm</location>
    </subcellularLocation>
</comment>
<comment type="similarity">
    <text evidence="1">Belongs to the peptidase T1A family.</text>
</comment>
<feature type="chain" id="PRO_0000397153" description="Proteasome subunit alpha">
    <location>
        <begin position="1"/>
        <end position="267"/>
    </location>
</feature>
<feature type="region of interest" description="Disordered" evidence="2">
    <location>
        <begin position="231"/>
        <end position="267"/>
    </location>
</feature>
<feature type="compositionally biased region" description="Basic and acidic residues" evidence="2">
    <location>
        <begin position="234"/>
        <end position="267"/>
    </location>
</feature>